<evidence type="ECO:0000255" key="1"/>
<evidence type="ECO:0000255" key="2">
    <source>
        <dbReference type="PROSITE-ProRule" id="PRU01252"/>
    </source>
</evidence>
<evidence type="ECO:0000269" key="3">
    <source>
    </source>
</evidence>
<evidence type="ECO:0000303" key="4">
    <source>
    </source>
</evidence>
<evidence type="ECO:0000305" key="5"/>
<evidence type="ECO:0000312" key="6">
    <source>
        <dbReference type="Proteomes" id="UP000001940"/>
    </source>
</evidence>
<evidence type="ECO:0000312" key="7">
    <source>
        <dbReference type="WormBase" id="Y22F5A.6"/>
    </source>
</evidence>
<feature type="signal peptide" evidence="1">
    <location>
        <begin position="1"/>
        <end position="15"/>
    </location>
</feature>
<feature type="chain" id="PRO_5004336832" description="Lysozyme-like protein 3">
    <location>
        <begin position="16"/>
        <end position="301"/>
    </location>
</feature>
<feature type="domain" description="Ch-type lysozyme" evidence="2">
    <location>
        <begin position="64"/>
        <end position="282"/>
    </location>
</feature>
<reference evidence="6" key="1">
    <citation type="journal article" date="1998" name="Science">
        <title>Genome sequence of the nematode C. elegans: a platform for investigating biology.</title>
        <authorList>
            <consortium name="The C. elegans sequencing consortium"/>
        </authorList>
    </citation>
    <scope>NUCLEOTIDE SEQUENCE [LARGE SCALE GENOMIC DNA]</scope>
    <source>
        <strain evidence="6">Bristol N2</strain>
    </source>
</reference>
<reference evidence="5" key="2">
    <citation type="journal article" date="2013" name="PLoS Genet.">
        <title>The Caenorhabditis elegans JNK signaling pathway activates expression of stress response genes by derepressing the Fos/HDAC repressor complex.</title>
        <authorList>
            <person name="Hattori A."/>
            <person name="Mizuno T."/>
            <person name="Akamatsu M."/>
            <person name="Hisamoto N."/>
            <person name="Matsumoto K."/>
        </authorList>
    </citation>
    <scope>FUNCTION</scope>
    <scope>INDUCTION BY COPPER IONS</scope>
    <scope>DISRUPTION PHENOTYPE</scope>
</reference>
<protein>
    <recommendedName>
        <fullName evidence="7">Lysozyme-like protein 3</fullName>
    </recommendedName>
</protein>
<accession>Q9XXS1</accession>
<name>LYS3_CAEEL</name>
<proteinExistence type="evidence at transcript level"/>
<comment type="function">
    <text evidence="3">Plays a role in the stress response to heavy metals such as copper, probably in a kgb-1-dependent manner.</text>
</comment>
<comment type="induction">
    <text evidence="3">By heavy metal stress conditions, in response to Cu(2+).</text>
</comment>
<comment type="disruption phenotype">
    <text evidence="3">RNAi-mediated knockdown results in partial sensitivity to Cu(2+) ions with less than 70% of animals reaching adulthood 4 days after egg laying.</text>
</comment>
<comment type="similarity">
    <text evidence="2">Belongs to the glycosyl hydrolase 25 family.</text>
</comment>
<comment type="caution">
    <text evidence="5">Weak similarity to other lysozymes and lacks the conserved active site.</text>
</comment>
<keyword id="KW-1185">Reference proteome</keyword>
<keyword id="KW-0732">Signal</keyword>
<keyword id="KW-0346">Stress response</keyword>
<dbReference type="EMBL" id="BX284605">
    <property type="protein sequence ID" value="CAA16319.1"/>
    <property type="molecule type" value="Genomic_DNA"/>
</dbReference>
<dbReference type="PIR" id="T26550">
    <property type="entry name" value="T26550"/>
</dbReference>
<dbReference type="RefSeq" id="NP_505644.1">
    <property type="nucleotide sequence ID" value="NM_073243.4"/>
</dbReference>
<dbReference type="SMR" id="Q9XXS1"/>
<dbReference type="FunCoup" id="Q9XXS1">
    <property type="interactions" value="4"/>
</dbReference>
<dbReference type="STRING" id="6239.Y22F5A.6.1"/>
<dbReference type="PaxDb" id="6239-Y22F5A.6"/>
<dbReference type="PeptideAtlas" id="Q9XXS1"/>
<dbReference type="EnsemblMetazoa" id="Y22F5A.6.1">
    <property type="protein sequence ID" value="Y22F5A.6.1"/>
    <property type="gene ID" value="WBGene00003092"/>
</dbReference>
<dbReference type="GeneID" id="179430"/>
<dbReference type="KEGG" id="cel:CELE_Y22F5A.6"/>
<dbReference type="UCSC" id="Y22F5A.6">
    <property type="organism name" value="c. elegans"/>
</dbReference>
<dbReference type="AGR" id="WB:WBGene00003092"/>
<dbReference type="CTD" id="179430"/>
<dbReference type="WormBase" id="Y22F5A.6">
    <property type="protein sequence ID" value="CE20201"/>
    <property type="gene ID" value="WBGene00003092"/>
    <property type="gene designation" value="lys-3"/>
</dbReference>
<dbReference type="eggNOG" id="ENOG502S5RB">
    <property type="taxonomic scope" value="Eukaryota"/>
</dbReference>
<dbReference type="GeneTree" id="ENSGT00970000195882"/>
<dbReference type="HOGENOM" id="CLU_073372_1_0_1"/>
<dbReference type="InParanoid" id="Q9XXS1"/>
<dbReference type="OMA" id="FLWYWHV"/>
<dbReference type="OrthoDB" id="25039at2759"/>
<dbReference type="PhylomeDB" id="Q9XXS1"/>
<dbReference type="PRO" id="PR:Q9XXS1"/>
<dbReference type="Proteomes" id="UP000001940">
    <property type="component" value="Chromosome V"/>
</dbReference>
<dbReference type="Bgee" id="WBGene00003092">
    <property type="expression patterns" value="Expressed in adult organism and 1 other cell type or tissue"/>
</dbReference>
<dbReference type="GO" id="GO:0003796">
    <property type="term" value="F:lysozyme activity"/>
    <property type="evidence" value="ECO:0007669"/>
    <property type="project" value="InterPro"/>
</dbReference>
<dbReference type="GO" id="GO:0016998">
    <property type="term" value="P:cell wall macromolecule catabolic process"/>
    <property type="evidence" value="ECO:0007669"/>
    <property type="project" value="InterPro"/>
</dbReference>
<dbReference type="GO" id="GO:0045087">
    <property type="term" value="P:innate immune response"/>
    <property type="evidence" value="ECO:0000318"/>
    <property type="project" value="GO_Central"/>
</dbReference>
<dbReference type="GO" id="GO:0009253">
    <property type="term" value="P:peptidoglycan catabolic process"/>
    <property type="evidence" value="ECO:0007669"/>
    <property type="project" value="InterPro"/>
</dbReference>
<dbReference type="GO" id="GO:0007165">
    <property type="term" value="P:signal transduction"/>
    <property type="evidence" value="ECO:0000318"/>
    <property type="project" value="GO_Central"/>
</dbReference>
<dbReference type="GO" id="GO:1990169">
    <property type="term" value="P:stress response to copper ion"/>
    <property type="evidence" value="ECO:0000315"/>
    <property type="project" value="WormBase"/>
</dbReference>
<dbReference type="CDD" id="cd06416">
    <property type="entry name" value="GH25_Lys1-like"/>
    <property type="match status" value="1"/>
</dbReference>
<dbReference type="FunFam" id="3.20.20.80:FF:000129">
    <property type="entry name" value="Lysozyme-like protein 7"/>
    <property type="match status" value="1"/>
</dbReference>
<dbReference type="Gene3D" id="3.20.20.80">
    <property type="entry name" value="Glycosidases"/>
    <property type="match status" value="1"/>
</dbReference>
<dbReference type="InterPro" id="IPR051595">
    <property type="entry name" value="GH25_Enzymes"/>
</dbReference>
<dbReference type="InterPro" id="IPR002053">
    <property type="entry name" value="Glyco_hydro_25"/>
</dbReference>
<dbReference type="InterPro" id="IPR017853">
    <property type="entry name" value="Glycoside_hydrolase_SF"/>
</dbReference>
<dbReference type="PANTHER" id="PTHR23208">
    <property type="entry name" value="LYSOZYME PROTEIN"/>
    <property type="match status" value="1"/>
</dbReference>
<dbReference type="PANTHER" id="PTHR23208:SF17">
    <property type="entry name" value="LYSOZYME-LIKE PROTEIN 3"/>
    <property type="match status" value="1"/>
</dbReference>
<dbReference type="SUPFAM" id="SSF51445">
    <property type="entry name" value="(Trans)glycosidases"/>
    <property type="match status" value="1"/>
</dbReference>
<dbReference type="PROSITE" id="PS51904">
    <property type="entry name" value="GLYCOSYL_HYDROL_F25_2"/>
    <property type="match status" value="1"/>
</dbReference>
<organism evidence="6">
    <name type="scientific">Caenorhabditis elegans</name>
    <dbReference type="NCBI Taxonomy" id="6239"/>
    <lineage>
        <taxon>Eukaryota</taxon>
        <taxon>Metazoa</taxon>
        <taxon>Ecdysozoa</taxon>
        <taxon>Nematoda</taxon>
        <taxon>Chromadorea</taxon>
        <taxon>Rhabditida</taxon>
        <taxon>Rhabditina</taxon>
        <taxon>Rhabditomorpha</taxon>
        <taxon>Rhabditoidea</taxon>
        <taxon>Rhabditidae</taxon>
        <taxon>Peloderinae</taxon>
        <taxon>Caenorhabditis</taxon>
    </lineage>
</organism>
<sequence length="301" mass="33784">MKLFALLVSITLCYSFPAPLQTNVSEPFGLLQKVSEQVIDPDYNIPEVKDAPAIPYDERNSPTHAYSVDISFHTTPSDMDCLRDQGYKSVFVRALNPIGNTYFDRNALNTINNAFEAGLGSEVYITPNINSTRSGADQISLVYQNLLANGINVRSIWIQVTSPTNWVAPMAVRIEFIQDMIRSAKNLGLSVGIYTSFYDWLEITGGWNTFSSDVFLWYWHVLSMGTDGETTPTLEDFRPFGPWRQATVKQFGQVEKLCGMIVNRNVYSTGNQHLSQIVHFSTHQENSSSEKKLIRVGGIGF</sequence>
<gene>
    <name evidence="7" type="primary">lys-3</name>
    <name evidence="4" type="synonym">kreg-2</name>
    <name evidence="7" type="ORF">Y22F5A.6</name>
</gene>